<keyword id="KW-0349">Heme</keyword>
<keyword id="KW-0408">Iron</keyword>
<keyword id="KW-0479">Metal-binding</keyword>
<keyword id="KW-0561">Oxygen transport</keyword>
<keyword id="KW-0813">Transport</keyword>
<protein>
    <recommendedName>
        <fullName>Hemoglobin subunit alpha-1</fullName>
    </recommendedName>
    <alternativeName>
        <fullName>Alpha-1-globin</fullName>
    </alternativeName>
    <alternativeName>
        <fullName>Hemoglobin alpha-1 chain</fullName>
    </alternativeName>
    <alternativeName>
        <fullName>Hemoglobin alpha-major chain</fullName>
    </alternativeName>
</protein>
<name>HBA1_XENBO</name>
<reference key="1">
    <citation type="journal article" date="1986" name="J. Mol. Evol.">
        <title>Globin evolution in the genus Xenopus: comparative analysis of cDNAs coding for adult globin polypeptides of Xenopus borealis and Xenopus tropicalis.</title>
        <authorList>
            <person name="Knoechel W."/>
            <person name="Korge E."/>
            <person name="Basner A."/>
            <person name="Meyerhof W."/>
        </authorList>
    </citation>
    <scope>NUCLEOTIDE SEQUENCE [MRNA]</scope>
</reference>
<comment type="function">
    <text>Involved in oxygen transport from the lung to the various peripheral tissues.</text>
</comment>
<comment type="subunit">
    <text>Heterotetramer of two alpha chains and two beta chains.</text>
</comment>
<comment type="tissue specificity">
    <text>Red blood cells.</text>
</comment>
<comment type="similarity">
    <text evidence="1">Belongs to the globin family.</text>
</comment>
<evidence type="ECO:0000255" key="1">
    <source>
        <dbReference type="PROSITE-ProRule" id="PRU00238"/>
    </source>
</evidence>
<proteinExistence type="evidence at transcript level"/>
<dbReference type="EMBL" id="M32453">
    <property type="protein sequence ID" value="AAA49643.1"/>
    <property type="molecule type" value="mRNA"/>
</dbReference>
<dbReference type="PIR" id="C25929">
    <property type="entry name" value="C25929"/>
</dbReference>
<dbReference type="SMR" id="P07430"/>
<dbReference type="GO" id="GO:0072562">
    <property type="term" value="C:blood microparticle"/>
    <property type="evidence" value="ECO:0007669"/>
    <property type="project" value="TreeGrafter"/>
</dbReference>
<dbReference type="GO" id="GO:0031838">
    <property type="term" value="C:haptoglobin-hemoglobin complex"/>
    <property type="evidence" value="ECO:0007669"/>
    <property type="project" value="TreeGrafter"/>
</dbReference>
<dbReference type="GO" id="GO:0005833">
    <property type="term" value="C:hemoglobin complex"/>
    <property type="evidence" value="ECO:0007669"/>
    <property type="project" value="InterPro"/>
</dbReference>
<dbReference type="GO" id="GO:0031720">
    <property type="term" value="F:haptoglobin binding"/>
    <property type="evidence" value="ECO:0007669"/>
    <property type="project" value="TreeGrafter"/>
</dbReference>
<dbReference type="GO" id="GO:0020037">
    <property type="term" value="F:heme binding"/>
    <property type="evidence" value="ECO:0007669"/>
    <property type="project" value="InterPro"/>
</dbReference>
<dbReference type="GO" id="GO:0046872">
    <property type="term" value="F:metal ion binding"/>
    <property type="evidence" value="ECO:0007669"/>
    <property type="project" value="UniProtKB-KW"/>
</dbReference>
<dbReference type="GO" id="GO:0043177">
    <property type="term" value="F:organic acid binding"/>
    <property type="evidence" value="ECO:0007669"/>
    <property type="project" value="TreeGrafter"/>
</dbReference>
<dbReference type="GO" id="GO:0019825">
    <property type="term" value="F:oxygen binding"/>
    <property type="evidence" value="ECO:0007669"/>
    <property type="project" value="InterPro"/>
</dbReference>
<dbReference type="GO" id="GO:0005344">
    <property type="term" value="F:oxygen carrier activity"/>
    <property type="evidence" value="ECO:0007669"/>
    <property type="project" value="UniProtKB-KW"/>
</dbReference>
<dbReference type="GO" id="GO:0004601">
    <property type="term" value="F:peroxidase activity"/>
    <property type="evidence" value="ECO:0007669"/>
    <property type="project" value="TreeGrafter"/>
</dbReference>
<dbReference type="GO" id="GO:0042744">
    <property type="term" value="P:hydrogen peroxide catabolic process"/>
    <property type="evidence" value="ECO:0007669"/>
    <property type="project" value="TreeGrafter"/>
</dbReference>
<dbReference type="CDD" id="cd08927">
    <property type="entry name" value="Hb-alpha-like"/>
    <property type="match status" value="1"/>
</dbReference>
<dbReference type="FunFam" id="1.10.490.10:FF:000002">
    <property type="entry name" value="Hemoglobin subunit alpha"/>
    <property type="match status" value="1"/>
</dbReference>
<dbReference type="Gene3D" id="1.10.490.10">
    <property type="entry name" value="Globins"/>
    <property type="match status" value="1"/>
</dbReference>
<dbReference type="InterPro" id="IPR000971">
    <property type="entry name" value="Globin"/>
</dbReference>
<dbReference type="InterPro" id="IPR009050">
    <property type="entry name" value="Globin-like_sf"/>
</dbReference>
<dbReference type="InterPro" id="IPR012292">
    <property type="entry name" value="Globin/Proto"/>
</dbReference>
<dbReference type="InterPro" id="IPR002338">
    <property type="entry name" value="Hemoglobin_a-typ"/>
</dbReference>
<dbReference type="InterPro" id="IPR050056">
    <property type="entry name" value="Hemoglobin_oxygen_transport"/>
</dbReference>
<dbReference type="PANTHER" id="PTHR11442">
    <property type="entry name" value="HEMOGLOBIN FAMILY MEMBER"/>
    <property type="match status" value="1"/>
</dbReference>
<dbReference type="PANTHER" id="PTHR11442:SF48">
    <property type="entry name" value="HEMOGLOBIN SUBUNIT ALPHA"/>
    <property type="match status" value="1"/>
</dbReference>
<dbReference type="Pfam" id="PF00042">
    <property type="entry name" value="Globin"/>
    <property type="match status" value="1"/>
</dbReference>
<dbReference type="PRINTS" id="PR00612">
    <property type="entry name" value="ALPHAHAEM"/>
</dbReference>
<dbReference type="SUPFAM" id="SSF46458">
    <property type="entry name" value="Globin-like"/>
    <property type="match status" value="1"/>
</dbReference>
<dbReference type="PROSITE" id="PS01033">
    <property type="entry name" value="GLOBIN"/>
    <property type="match status" value="1"/>
</dbReference>
<gene>
    <name type="primary">hba1</name>
</gene>
<accession>P07430</accession>
<sequence>MLLSADDKKHIKAIMPSIAAHGDKFGGEALYRMFLVNPKTKTYFPTFDFHHNSKQISAHGKKVVDALNEASNHLDNIAGSLSKLSDLHAYDLRVDPGNFPLLAHNILVVVAMNFPKQFDPATHKALDKFLATVSSVLTSKYR</sequence>
<feature type="initiator methionine" description="Removed">
    <location>
        <position position="1"/>
    </location>
</feature>
<feature type="chain" id="PRO_0000052805" description="Hemoglobin subunit alpha-1">
    <location>
        <begin position="2"/>
        <end position="142"/>
    </location>
</feature>
<feature type="domain" description="Globin" evidence="1">
    <location>
        <begin position="2"/>
        <end position="142"/>
    </location>
</feature>
<feature type="binding site" evidence="1">
    <location>
        <position position="59"/>
    </location>
    <ligand>
        <name>O2</name>
        <dbReference type="ChEBI" id="CHEBI:15379"/>
    </ligand>
</feature>
<feature type="binding site" description="proximal binding residue" evidence="1">
    <location>
        <position position="88"/>
    </location>
    <ligand>
        <name>heme b</name>
        <dbReference type="ChEBI" id="CHEBI:60344"/>
    </ligand>
    <ligandPart>
        <name>Fe</name>
        <dbReference type="ChEBI" id="CHEBI:18248"/>
    </ligandPart>
</feature>
<organism>
    <name type="scientific">Xenopus borealis</name>
    <name type="common">Kenyan clawed frog</name>
    <dbReference type="NCBI Taxonomy" id="8354"/>
    <lineage>
        <taxon>Eukaryota</taxon>
        <taxon>Metazoa</taxon>
        <taxon>Chordata</taxon>
        <taxon>Craniata</taxon>
        <taxon>Vertebrata</taxon>
        <taxon>Euteleostomi</taxon>
        <taxon>Amphibia</taxon>
        <taxon>Batrachia</taxon>
        <taxon>Anura</taxon>
        <taxon>Pipoidea</taxon>
        <taxon>Pipidae</taxon>
        <taxon>Xenopodinae</taxon>
        <taxon>Xenopus</taxon>
        <taxon>Xenopus</taxon>
    </lineage>
</organism>